<protein>
    <recommendedName>
        <fullName evidence="1">1-deoxy-D-xylulose-5-phosphate synthase</fullName>
        <ecNumber evidence="1">2.2.1.7</ecNumber>
    </recommendedName>
    <alternativeName>
        <fullName evidence="1">1-deoxyxylulose-5-phosphate synthase</fullName>
        <shortName evidence="1">DXP synthase</shortName>
        <shortName evidence="1">DXPS</shortName>
    </alternativeName>
</protein>
<dbReference type="EC" id="2.2.1.7" evidence="1"/>
<dbReference type="EMBL" id="CP000359">
    <property type="protein sequence ID" value="ABF45294.1"/>
    <property type="molecule type" value="Genomic_DNA"/>
</dbReference>
<dbReference type="RefSeq" id="WP_011530131.1">
    <property type="nucleotide sequence ID" value="NC_008025.1"/>
</dbReference>
<dbReference type="SMR" id="Q1IZP0"/>
<dbReference type="STRING" id="319795.Dgeo_0994"/>
<dbReference type="KEGG" id="dge:Dgeo_0994"/>
<dbReference type="eggNOG" id="COG1154">
    <property type="taxonomic scope" value="Bacteria"/>
</dbReference>
<dbReference type="HOGENOM" id="CLU_009227_1_4_0"/>
<dbReference type="UniPathway" id="UPA00064">
    <property type="reaction ID" value="UER00091"/>
</dbReference>
<dbReference type="Proteomes" id="UP000002431">
    <property type="component" value="Chromosome"/>
</dbReference>
<dbReference type="GO" id="GO:0005829">
    <property type="term" value="C:cytosol"/>
    <property type="evidence" value="ECO:0007669"/>
    <property type="project" value="TreeGrafter"/>
</dbReference>
<dbReference type="GO" id="GO:0008661">
    <property type="term" value="F:1-deoxy-D-xylulose-5-phosphate synthase activity"/>
    <property type="evidence" value="ECO:0007669"/>
    <property type="project" value="UniProtKB-UniRule"/>
</dbReference>
<dbReference type="GO" id="GO:0000287">
    <property type="term" value="F:magnesium ion binding"/>
    <property type="evidence" value="ECO:0007669"/>
    <property type="project" value="UniProtKB-UniRule"/>
</dbReference>
<dbReference type="GO" id="GO:0030976">
    <property type="term" value="F:thiamine pyrophosphate binding"/>
    <property type="evidence" value="ECO:0007669"/>
    <property type="project" value="UniProtKB-UniRule"/>
</dbReference>
<dbReference type="GO" id="GO:0052865">
    <property type="term" value="P:1-deoxy-D-xylulose 5-phosphate biosynthetic process"/>
    <property type="evidence" value="ECO:0007669"/>
    <property type="project" value="UniProtKB-UniPathway"/>
</dbReference>
<dbReference type="GO" id="GO:0019288">
    <property type="term" value="P:isopentenyl diphosphate biosynthetic process, methylerythritol 4-phosphate pathway"/>
    <property type="evidence" value="ECO:0007669"/>
    <property type="project" value="TreeGrafter"/>
</dbReference>
<dbReference type="GO" id="GO:0016114">
    <property type="term" value="P:terpenoid biosynthetic process"/>
    <property type="evidence" value="ECO:0007669"/>
    <property type="project" value="UniProtKB-UniRule"/>
</dbReference>
<dbReference type="GO" id="GO:0009228">
    <property type="term" value="P:thiamine biosynthetic process"/>
    <property type="evidence" value="ECO:0007669"/>
    <property type="project" value="UniProtKB-UniRule"/>
</dbReference>
<dbReference type="CDD" id="cd02007">
    <property type="entry name" value="TPP_DXS"/>
    <property type="match status" value="1"/>
</dbReference>
<dbReference type="CDD" id="cd07033">
    <property type="entry name" value="TPP_PYR_DXS_TK_like"/>
    <property type="match status" value="1"/>
</dbReference>
<dbReference type="FunFam" id="3.40.50.920:FF:000002">
    <property type="entry name" value="1-deoxy-D-xylulose-5-phosphate synthase"/>
    <property type="match status" value="1"/>
</dbReference>
<dbReference type="FunFam" id="3.40.50.970:FF:000005">
    <property type="entry name" value="1-deoxy-D-xylulose-5-phosphate synthase"/>
    <property type="match status" value="1"/>
</dbReference>
<dbReference type="Gene3D" id="3.40.50.920">
    <property type="match status" value="1"/>
</dbReference>
<dbReference type="Gene3D" id="3.40.50.970">
    <property type="match status" value="2"/>
</dbReference>
<dbReference type="HAMAP" id="MF_00315">
    <property type="entry name" value="DXP_synth"/>
    <property type="match status" value="1"/>
</dbReference>
<dbReference type="InterPro" id="IPR005477">
    <property type="entry name" value="Dxylulose-5-P_synthase"/>
</dbReference>
<dbReference type="InterPro" id="IPR029061">
    <property type="entry name" value="THDP-binding"/>
</dbReference>
<dbReference type="InterPro" id="IPR009014">
    <property type="entry name" value="Transketo_C/PFOR_II"/>
</dbReference>
<dbReference type="InterPro" id="IPR005475">
    <property type="entry name" value="Transketolase-like_Pyr-bd"/>
</dbReference>
<dbReference type="InterPro" id="IPR020826">
    <property type="entry name" value="Transketolase_BS"/>
</dbReference>
<dbReference type="InterPro" id="IPR033248">
    <property type="entry name" value="Transketolase_C"/>
</dbReference>
<dbReference type="NCBIfam" id="TIGR00204">
    <property type="entry name" value="dxs"/>
    <property type="match status" value="1"/>
</dbReference>
<dbReference type="NCBIfam" id="NF003933">
    <property type="entry name" value="PRK05444.2-2"/>
    <property type="match status" value="1"/>
</dbReference>
<dbReference type="PANTHER" id="PTHR43322">
    <property type="entry name" value="1-D-DEOXYXYLULOSE 5-PHOSPHATE SYNTHASE-RELATED"/>
    <property type="match status" value="1"/>
</dbReference>
<dbReference type="PANTHER" id="PTHR43322:SF5">
    <property type="entry name" value="1-DEOXY-D-XYLULOSE-5-PHOSPHATE SYNTHASE, CHLOROPLASTIC"/>
    <property type="match status" value="1"/>
</dbReference>
<dbReference type="Pfam" id="PF13292">
    <property type="entry name" value="DXP_synthase_N"/>
    <property type="match status" value="1"/>
</dbReference>
<dbReference type="Pfam" id="PF02779">
    <property type="entry name" value="Transket_pyr"/>
    <property type="match status" value="1"/>
</dbReference>
<dbReference type="Pfam" id="PF02780">
    <property type="entry name" value="Transketolase_C"/>
    <property type="match status" value="1"/>
</dbReference>
<dbReference type="SMART" id="SM00861">
    <property type="entry name" value="Transket_pyr"/>
    <property type="match status" value="1"/>
</dbReference>
<dbReference type="SUPFAM" id="SSF52518">
    <property type="entry name" value="Thiamin diphosphate-binding fold (THDP-binding)"/>
    <property type="match status" value="2"/>
</dbReference>
<dbReference type="SUPFAM" id="SSF52922">
    <property type="entry name" value="TK C-terminal domain-like"/>
    <property type="match status" value="1"/>
</dbReference>
<dbReference type="PROSITE" id="PS00802">
    <property type="entry name" value="TRANSKETOLASE_2"/>
    <property type="match status" value="1"/>
</dbReference>
<organism>
    <name type="scientific">Deinococcus geothermalis (strain DSM 11300 / CIP 105573 / AG-3a)</name>
    <dbReference type="NCBI Taxonomy" id="319795"/>
    <lineage>
        <taxon>Bacteria</taxon>
        <taxon>Thermotogati</taxon>
        <taxon>Deinococcota</taxon>
        <taxon>Deinococci</taxon>
        <taxon>Deinococcales</taxon>
        <taxon>Deinococcaceae</taxon>
        <taxon>Deinococcus</taxon>
    </lineage>
</organism>
<sequence length="633" mass="68039">MSEPTANLQPASRTPLLDRVNSPEDLKRLGRDQLPQLAAELREEIVRVCSVGGLHLASSLGATDLIVALHYVLHSPRDRILFDVGHQAYAHKMLTGRRHLMHTVKKEGGLSGFTKVSESEHDAITVGHASTSLANALGMALARDALGQDYKVAAVIGDGSLTGGMALAALNTIGDLGRRMLIVLNDNEMSISENVGAINRFMRGLQVQKWFQEGEEAGKKAVQAVSKPLANLMSRAKSSTRHFFDPASVNPFAAMGVRYVGPVDGHNVQELVWLIERLVDLDGPTILHVVTKKGKGLSYAEADPIKWHGPGKFDPATGESVPSNAYSWSSAFGDAVTELARLDPRTFVITPAMREGSGLVRYSQVHPHRYLDVGIAEDVAVTTAAGMALQGMRPIVAIYSTFLQRAYDQVLHDVAIENLNVTFAIDRGGIVGADGATHNGVFDLSYLRSIPNVGIGLPKDAAELRGMLKYAQEHAGPFAIRYPRGNVERVPEGTWPELRWGTWERLQDGDDVVILAGGKALEYALKAARDLPGVGVVNARFVKPLDQGMLREVATKARALVTVEDNTVVGGFGSAVLEALSALGLRTPVRVLGIPDAFQDHATVESVHARAGIDAPAIRTVLAELGVDVPLEV</sequence>
<feature type="chain" id="PRO_0000256410" description="1-deoxy-D-xylulose-5-phosphate synthase">
    <location>
        <begin position="1"/>
        <end position="633"/>
    </location>
</feature>
<feature type="region of interest" description="Disordered" evidence="2">
    <location>
        <begin position="1"/>
        <end position="21"/>
    </location>
</feature>
<feature type="compositionally biased region" description="Polar residues" evidence="2">
    <location>
        <begin position="1"/>
        <end position="12"/>
    </location>
</feature>
<feature type="binding site" evidence="1">
    <location>
        <position position="86"/>
    </location>
    <ligand>
        <name>thiamine diphosphate</name>
        <dbReference type="ChEBI" id="CHEBI:58937"/>
    </ligand>
</feature>
<feature type="binding site" evidence="1">
    <location>
        <begin position="127"/>
        <end position="129"/>
    </location>
    <ligand>
        <name>thiamine diphosphate</name>
        <dbReference type="ChEBI" id="CHEBI:58937"/>
    </ligand>
</feature>
<feature type="binding site" evidence="1">
    <location>
        <position position="158"/>
    </location>
    <ligand>
        <name>Mg(2+)</name>
        <dbReference type="ChEBI" id="CHEBI:18420"/>
    </ligand>
</feature>
<feature type="binding site" evidence="1">
    <location>
        <begin position="159"/>
        <end position="160"/>
    </location>
    <ligand>
        <name>thiamine diphosphate</name>
        <dbReference type="ChEBI" id="CHEBI:58937"/>
    </ligand>
</feature>
<feature type="binding site" evidence="1">
    <location>
        <position position="187"/>
    </location>
    <ligand>
        <name>Mg(2+)</name>
        <dbReference type="ChEBI" id="CHEBI:18420"/>
    </ligand>
</feature>
<feature type="binding site" evidence="1">
    <location>
        <position position="187"/>
    </location>
    <ligand>
        <name>thiamine diphosphate</name>
        <dbReference type="ChEBI" id="CHEBI:58937"/>
    </ligand>
</feature>
<feature type="binding site" evidence="1">
    <location>
        <position position="377"/>
    </location>
    <ligand>
        <name>thiamine diphosphate</name>
        <dbReference type="ChEBI" id="CHEBI:58937"/>
    </ligand>
</feature>
<reference key="1">
    <citation type="submission" date="2006-04" db="EMBL/GenBank/DDBJ databases">
        <title>Complete sequence of chromosome of Deinococcus geothermalis DSM 11300.</title>
        <authorList>
            <person name="Copeland A."/>
            <person name="Lucas S."/>
            <person name="Lapidus A."/>
            <person name="Barry K."/>
            <person name="Detter J.C."/>
            <person name="Glavina del Rio T."/>
            <person name="Hammon N."/>
            <person name="Israni S."/>
            <person name="Dalin E."/>
            <person name="Tice H."/>
            <person name="Pitluck S."/>
            <person name="Brettin T."/>
            <person name="Bruce D."/>
            <person name="Han C."/>
            <person name="Tapia R."/>
            <person name="Saunders E."/>
            <person name="Gilna P."/>
            <person name="Schmutz J."/>
            <person name="Larimer F."/>
            <person name="Land M."/>
            <person name="Hauser L."/>
            <person name="Kyrpides N."/>
            <person name="Kim E."/>
            <person name="Daly M.J."/>
            <person name="Fredrickson J.K."/>
            <person name="Makarova K.S."/>
            <person name="Gaidamakova E.K."/>
            <person name="Zhai M."/>
            <person name="Richardson P."/>
        </authorList>
    </citation>
    <scope>NUCLEOTIDE SEQUENCE [LARGE SCALE GENOMIC DNA]</scope>
    <source>
        <strain>DSM 11300 / CIP 105573 / AG-3a</strain>
    </source>
</reference>
<accession>Q1IZP0</accession>
<keyword id="KW-0414">Isoprene biosynthesis</keyword>
<keyword id="KW-0460">Magnesium</keyword>
<keyword id="KW-0479">Metal-binding</keyword>
<keyword id="KW-0784">Thiamine biosynthesis</keyword>
<keyword id="KW-0786">Thiamine pyrophosphate</keyword>
<keyword id="KW-0808">Transferase</keyword>
<gene>
    <name evidence="1" type="primary">dxs</name>
    <name type="ordered locus">Dgeo_0994</name>
</gene>
<comment type="function">
    <text evidence="1">Catalyzes the acyloin condensation reaction between C atoms 2 and 3 of pyruvate and glyceraldehyde 3-phosphate to yield 1-deoxy-D-xylulose-5-phosphate (DXP).</text>
</comment>
<comment type="catalytic activity">
    <reaction evidence="1">
        <text>D-glyceraldehyde 3-phosphate + pyruvate + H(+) = 1-deoxy-D-xylulose 5-phosphate + CO2</text>
        <dbReference type="Rhea" id="RHEA:12605"/>
        <dbReference type="ChEBI" id="CHEBI:15361"/>
        <dbReference type="ChEBI" id="CHEBI:15378"/>
        <dbReference type="ChEBI" id="CHEBI:16526"/>
        <dbReference type="ChEBI" id="CHEBI:57792"/>
        <dbReference type="ChEBI" id="CHEBI:59776"/>
        <dbReference type="EC" id="2.2.1.7"/>
    </reaction>
</comment>
<comment type="cofactor">
    <cofactor evidence="1">
        <name>Mg(2+)</name>
        <dbReference type="ChEBI" id="CHEBI:18420"/>
    </cofactor>
    <text evidence="1">Binds 1 Mg(2+) ion per subunit.</text>
</comment>
<comment type="cofactor">
    <cofactor evidence="1">
        <name>thiamine diphosphate</name>
        <dbReference type="ChEBI" id="CHEBI:58937"/>
    </cofactor>
    <text evidence="1">Binds 1 thiamine pyrophosphate per subunit.</text>
</comment>
<comment type="pathway">
    <text evidence="1">Metabolic intermediate biosynthesis; 1-deoxy-D-xylulose 5-phosphate biosynthesis; 1-deoxy-D-xylulose 5-phosphate from D-glyceraldehyde 3-phosphate and pyruvate: step 1/1.</text>
</comment>
<comment type="subunit">
    <text evidence="1">Homodimer.</text>
</comment>
<comment type="similarity">
    <text evidence="1">Belongs to the transketolase family. DXPS subfamily.</text>
</comment>
<name>DXS_DEIGD</name>
<evidence type="ECO:0000255" key="1">
    <source>
        <dbReference type="HAMAP-Rule" id="MF_00315"/>
    </source>
</evidence>
<evidence type="ECO:0000256" key="2">
    <source>
        <dbReference type="SAM" id="MobiDB-lite"/>
    </source>
</evidence>
<proteinExistence type="inferred from homology"/>